<comment type="function">
    <text evidence="8 9 10">Potassium channel activated by both membrane depolarization or increase in cytosolic Ca(2+) that mediates export of K(+). It is also activated by concentration of cytosolic Mg(2+). Its activation dampens the excitatory events that elevate the cytosolic Ca(2+) concentration and/or depolarize the cell membrane. It therefore contributes to repolarization of the membrane potential. Plays a key role in controlling excitability in a number of systems, such as regulation of the contraction of smooth muscle, the tuning of hair cells in the cochlea, regulation of transmitter release, and innate immunity. In smooth muscles, its activation by high level of Ca(2+), caused by ryanodine receptors in the sarcoplasmic reticulum, regulates the membrane potential. In cochlea cells, its number and kinetic properties partly determine the characteristic frequency of each hair cell and thereby helps to establish a tonotopic map. Kinetics of KCNMA1 channels are determined by alternative splicing, phosphorylation status and its combination with modulating beta subunits. Highly sensitive to both iberiotoxin (IbTx) and charybdotoxin (CTX).</text>
</comment>
<comment type="catalytic activity">
    <reaction evidence="8 9 10">
        <text>K(+)(in) = K(+)(out)</text>
        <dbReference type="Rhea" id="RHEA:29463"/>
        <dbReference type="ChEBI" id="CHEBI:29103"/>
    </reaction>
</comment>
<comment type="activity regulation">
    <text evidence="4 9">Ethanol and carbon monoxide-bound heme increase channel activation. Heme inhibits channel activation (By similarity). Phosphorylation of Thr-139 leads to inhibition of channel activity by ethanol.</text>
</comment>
<comment type="subunit">
    <text evidence="3 4">Homotetramer; which constitutes the calcium-activated potassium channel. Interacts with beta subunits KCNMB1, KCNMB2, KCNMB3 and KCNMB4. Interacts with gamma subunits LRRC26, LRRC38, LRRC52 and LRRC55. Beta and gamma subunits are accessory, and modulate its activity. Interacts with RAB11B (By similarity).</text>
</comment>
<comment type="subcellular location">
    <subcellularLocation>
        <location evidence="4">Cell membrane</location>
        <topology evidence="5">Multi-pass membrane protein</topology>
    </subcellularLocation>
</comment>
<comment type="alternative products">
    <event type="alternative splicing"/>
    <isoform>
        <id>Q28204-1</id>
        <name>1</name>
        <name>A</name>
        <name>BKA</name>
        <sequence type="displayed"/>
    </isoform>
    <isoform>
        <id>Q28204-2</id>
        <name>2</name>
        <name>B</name>
        <name>BKB</name>
        <sequence type="described" ref="VSP_009951"/>
    </isoform>
    <isoform>
        <id>Q28204-3</id>
        <name>3</name>
        <name>C</name>
        <name>BKC</name>
        <sequence type="described" ref="VSP_009950"/>
    </isoform>
    <text>May be partially controlled by hormonal stress. Additional isoforms seem to exist.</text>
</comment>
<comment type="domain">
    <text evidence="4">The S0 segment is essential for the modulation by the accessory beta subunits KCNMB1, KCNMB2, KCNMB3 and KCNMB4.</text>
</comment>
<comment type="domain">
    <text evidence="4">The S4 segment, which is characterized by a series of positively charged amino acids at every third position, is part of the voltage-sensor.</text>
</comment>
<comment type="domain">
    <text evidence="4">The pore-forming domain (also referred as P region) is imbedded into the membrane, and forms the selectivity filter of the pore. It contains the signature sequence of potassium channels that displays selectivity to potassium (By similarity).</text>
</comment>
<comment type="domain">
    <text evidence="1">The RCK N-terminal domain mediates the homotetramerization, thereby promoting the assembly of monomers into functional potassium channel. It includes binding sites for Ca(2+) and Mg(2+) (By similarity).</text>
</comment>
<comment type="domain">
    <text evidence="4">The heme-binding motif mediates inhibition of channel activation by heme. Carbon monoxide-bound heme leads to increased channel activation (By similarity).</text>
</comment>
<comment type="domain">
    <text evidence="2">The calcium bowl constitutes one of the Ca(2+) sensors and probably acts as a Ca(2+)-binding site. There are however other Ca(2+) sensor regions required for activation of the channel.</text>
</comment>
<comment type="PTM">
    <molecule>Isoform 1</molecule>
    <text evidence="8">Phosphorylated. Stimulated by PKG, but not by PKA. In smooth muscles, phosphorylation affects its activity.</text>
</comment>
<comment type="PTM">
    <molecule>Isoform 2</molecule>
    <text evidence="8">Phosphorylated. Stimulated by PKG, but not by PKA. In smooth muscles, phosphorylation affects its activity.</text>
</comment>
<comment type="PTM">
    <molecule>Isoform 3</molecule>
    <text evidence="8">Phosphorylated. Exclusively stimulated by PKA. In smooth muscles, phosphorylation affects its activity.</text>
</comment>
<comment type="PTM">
    <text evidence="9 10">Incremental phosphorylation of Thr-139 of the KCNMA1 tetramer changes the response to ethanol from increased activation to inhibition of channel activity.</text>
</comment>
<comment type="PTM">
    <text evidence="4">Palmitoylation by ZDHHC22 and ZDHHC23 within the intracellular linker between the S0 and S1 transmembrane domains regulates localization to the plasma membrane. Depalmitoylated by LYPLA1 and LYPLAL1, leading to retard exit from the trans-Golgi network (By similarity).</text>
</comment>
<comment type="miscellaneous">
    <text>The protein was initially thought to contain two functionally distinct parts: The core channel (from the N-terminus to the S9 segment) that mediates the channel activity, and the cytoplasmic tail (from the S9 segment to the C-terminus) that mediates the calcium sensing. The situation is however more complex, since the core channel also contains binding sites for Ca(2+) and Mg(2+).</text>
</comment>
<comment type="similarity">
    <text evidence="12">Belongs to the potassium channel family. Calcium-activated (TC 1.A.1.3) subfamily. KCa1.1/KCNMA1 sub-subfamily.</text>
</comment>
<name>KCMA1_BOVIN</name>
<proteinExistence type="evidence at protein level"/>
<gene>
    <name type="primary">KCNMA1</name>
    <name type="synonym">KCNMA</name>
</gene>
<organism>
    <name type="scientific">Bos taurus</name>
    <name type="common">Bovine</name>
    <dbReference type="NCBI Taxonomy" id="9913"/>
    <lineage>
        <taxon>Eukaryota</taxon>
        <taxon>Metazoa</taxon>
        <taxon>Chordata</taxon>
        <taxon>Craniata</taxon>
        <taxon>Vertebrata</taxon>
        <taxon>Euteleostomi</taxon>
        <taxon>Mammalia</taxon>
        <taxon>Eutheria</taxon>
        <taxon>Laurasiatheria</taxon>
        <taxon>Artiodactyla</taxon>
        <taxon>Ruminantia</taxon>
        <taxon>Pecora</taxon>
        <taxon>Bovidae</taxon>
        <taxon>Bovinae</taxon>
        <taxon>Bos</taxon>
    </lineage>
</organism>
<feature type="chain" id="PRO_0000054130" description="Calcium-activated potassium channel subunit alpha-1">
    <location>
        <begin position="1"/>
        <end position="1166"/>
    </location>
</feature>
<feature type="topological domain" description="Extracellular" evidence="5">
    <location>
        <begin position="1"/>
        <end position="74"/>
    </location>
</feature>
<feature type="transmembrane region" description="Helical; Name=Segment S0" evidence="5">
    <location>
        <begin position="75"/>
        <end position="95"/>
    </location>
</feature>
<feature type="topological domain" description="Cytoplasmic" evidence="5">
    <location>
        <begin position="96"/>
        <end position="166"/>
    </location>
</feature>
<feature type="transmembrane region" description="Helical; Name=Segment S1" evidence="5">
    <location>
        <begin position="167"/>
        <end position="187"/>
    </location>
</feature>
<feature type="topological domain" description="Extracellular" evidence="5">
    <location>
        <begin position="188"/>
        <end position="202"/>
    </location>
</feature>
<feature type="transmembrane region" description="Helical; Name=Segment S2" evidence="5">
    <location>
        <begin position="203"/>
        <end position="223"/>
    </location>
</feature>
<feature type="topological domain" description="Cytoplasmic" evidence="5">
    <location>
        <begin position="224"/>
        <end position="227"/>
    </location>
</feature>
<feature type="transmembrane region" description="Helical; Name=Segment S3" evidence="5">
    <location>
        <begin position="228"/>
        <end position="248"/>
    </location>
</feature>
<feature type="topological domain" description="Extracellular" evidence="5">
    <location>
        <begin position="249"/>
        <end position="252"/>
    </location>
</feature>
<feature type="transmembrane region" description="Helical; Voltage-sensor; Name=Segment S4" evidence="5">
    <location>
        <begin position="253"/>
        <end position="273"/>
    </location>
</feature>
<feature type="topological domain" description="Cytoplasmic" evidence="5">
    <location>
        <begin position="274"/>
        <end position="288"/>
    </location>
</feature>
<feature type="transmembrane region" description="Helical; Name=Segment S5" evidence="5">
    <location>
        <begin position="289"/>
        <end position="309"/>
    </location>
</feature>
<feature type="topological domain" description="Extracellular" evidence="5">
    <location>
        <begin position="310"/>
        <end position="323"/>
    </location>
</feature>
<feature type="intramembrane region" description="Pore-forming; Name=P region" evidence="5">
    <location>
        <begin position="324"/>
        <end position="346"/>
    </location>
</feature>
<feature type="topological domain" description="Extracellular" evidence="5">
    <location>
        <begin position="347"/>
        <end position="355"/>
    </location>
</feature>
<feature type="transmembrane region" description="Helical; Name=Segment S6" evidence="5">
    <location>
        <begin position="356"/>
        <end position="376"/>
    </location>
</feature>
<feature type="topological domain" description="Cytoplasmic" evidence="5">
    <location>
        <begin position="377"/>
        <end position="1166"/>
    </location>
</feature>
<feature type="domain" description="RCK N-terminal 1" evidence="6">
    <location>
        <begin position="395"/>
        <end position="537"/>
    </location>
</feature>
<feature type="domain" description="RCK N-terminal 2" evidence="6">
    <location>
        <begin position="769"/>
        <end position="913"/>
    </location>
</feature>
<feature type="region of interest" description="Disordered" evidence="7">
    <location>
        <begin position="1"/>
        <end position="20"/>
    </location>
</feature>
<feature type="region of interest" description="Disordered" evidence="7">
    <location>
        <begin position="30"/>
        <end position="51"/>
    </location>
</feature>
<feature type="region of interest" description="Segment S7">
    <location>
        <begin position="544"/>
        <end position="564"/>
    </location>
</feature>
<feature type="region of interest" description="Segment S8">
    <location>
        <begin position="601"/>
        <end position="621"/>
    </location>
</feature>
<feature type="region of interest" description="Heme-binding motif" evidence="4">
    <location>
        <begin position="665"/>
        <end position="669"/>
    </location>
</feature>
<feature type="region of interest" description="Disordered" evidence="7">
    <location>
        <begin position="689"/>
        <end position="717"/>
    </location>
</feature>
<feature type="region of interest" description="Segment S9">
    <location>
        <begin position="767"/>
        <end position="787"/>
    </location>
</feature>
<feature type="region of interest" description="Segment S10">
    <location>
        <begin position="962"/>
        <end position="982"/>
    </location>
</feature>
<feature type="region of interest" description="Disordered" evidence="7">
    <location>
        <begin position="1116"/>
        <end position="1166"/>
    </location>
</feature>
<feature type="short sequence motif" description="Selectivity for potassium">
    <location>
        <begin position="340"/>
        <end position="343"/>
    </location>
</feature>
<feature type="short sequence motif" description="Calcium bowl" evidence="2">
    <location>
        <begin position="933"/>
        <end position="955"/>
    </location>
</feature>
<feature type="compositionally biased region" description="Gly residues" evidence="7">
    <location>
        <begin position="1"/>
        <end position="15"/>
    </location>
</feature>
<feature type="compositionally biased region" description="Low complexity" evidence="7">
    <location>
        <begin position="33"/>
        <end position="48"/>
    </location>
</feature>
<feature type="compositionally biased region" description="Low complexity" evidence="7">
    <location>
        <begin position="1116"/>
        <end position="1141"/>
    </location>
</feature>
<feature type="compositionally biased region" description="Basic and acidic residues" evidence="7">
    <location>
        <begin position="1150"/>
        <end position="1166"/>
    </location>
</feature>
<feature type="binding site" evidence="12">
    <location>
        <position position="427"/>
    </location>
    <ligand>
        <name>Mg(2+)</name>
        <dbReference type="ChEBI" id="CHEBI:18420"/>
    </ligand>
</feature>
<feature type="binding site" evidence="12">
    <location>
        <position position="450"/>
    </location>
    <ligand>
        <name>Mg(2+)</name>
        <dbReference type="ChEBI" id="CHEBI:18420"/>
    </ligand>
</feature>
<feature type="binding site" evidence="12">
    <location>
        <position position="452"/>
    </location>
    <ligand>
        <name>Mg(2+)</name>
        <dbReference type="ChEBI" id="CHEBI:18420"/>
    </ligand>
</feature>
<feature type="binding site" evidence="2">
    <location>
        <position position="942"/>
    </location>
    <ligand>
        <name>Ca(2+)</name>
        <dbReference type="ChEBI" id="CHEBI:29108"/>
    </ligand>
</feature>
<feature type="binding site" evidence="2">
    <location>
        <position position="945"/>
    </location>
    <ligand>
        <name>Ca(2+)</name>
        <dbReference type="ChEBI" id="CHEBI:29108"/>
    </ligand>
</feature>
<feature type="binding site" evidence="2">
    <location>
        <position position="948"/>
    </location>
    <ligand>
        <name>Ca(2+)</name>
        <dbReference type="ChEBI" id="CHEBI:29108"/>
    </ligand>
</feature>
<feature type="binding site" evidence="2">
    <location>
        <position position="950"/>
    </location>
    <ligand>
        <name>Ca(2+)</name>
        <dbReference type="ChEBI" id="CHEBI:29108"/>
    </ligand>
</feature>
<feature type="modified residue" description="Phosphothreonine; by CamK2" evidence="9">
    <location>
        <position position="139"/>
    </location>
</feature>
<feature type="modified residue" description="Phosphothreonine" evidence="3">
    <location>
        <position position="693"/>
    </location>
</feature>
<feature type="modified residue" description="Phosphoserine" evidence="3">
    <location>
        <position position="695"/>
    </location>
</feature>
<feature type="modified residue" description="Phosphoserine" evidence="3">
    <location>
        <position position="708"/>
    </location>
</feature>
<feature type="modified residue" description="Phosphoserine" evidence="3">
    <location>
        <position position="712"/>
    </location>
</feature>
<feature type="modified residue" description="Phosphothreonine" evidence="3">
    <location>
        <position position="900"/>
    </location>
</feature>
<feature type="modified residue" description="Phosphoserine" evidence="3">
    <location>
        <position position="908"/>
    </location>
</feature>
<feature type="modified residue" description="Phosphoserine" evidence="3">
    <location>
        <position position="912"/>
    </location>
</feature>
<feature type="modified residue" description="Phosphoserine; by PKG" evidence="13">
    <location>
        <position position="1151"/>
    </location>
</feature>
<feature type="modified residue" description="Phosphoserine; by PKG" evidence="13">
    <location>
        <position position="1154"/>
    </location>
</feature>
<feature type="lipid moiety-binding region" description="S-palmitoyl cysteine" evidence="1">
    <location>
        <position position="106"/>
    </location>
</feature>
<feature type="lipid moiety-binding region" description="S-palmitoyl cysteine" evidence="1">
    <location>
        <position position="107"/>
    </location>
</feature>
<feature type="lipid moiety-binding region" description="S-palmitoyl cysteine" evidence="1">
    <location>
        <position position="109"/>
    </location>
</feature>
<feature type="splice variant" id="VSP_009950" description="In isoform 3." evidence="11">
    <original>STANRQNRPKSRESRDKQKYVQEERL</original>
    <variation>PQT</variation>
    <location>
        <begin position="1141"/>
        <end position="1166"/>
    </location>
</feature>
<feature type="splice variant" id="VSP_009951" description="In isoform 2." evidence="11">
    <original>YVQEERL</original>
    <variation>KEMVYL</variation>
    <location>
        <begin position="1160"/>
        <end position="1166"/>
    </location>
</feature>
<feature type="mutagenesis site" description="Loss of phosphorylation by CaMK2 and, therefore, inhibition of channel activity in response to ethanol." evidence="9">
    <original>T</original>
    <variation>V</variation>
    <location>
        <position position="139"/>
    </location>
</feature>
<feature type="mutagenesis site" description="Induces a stimulation by PKA instead of PKG; when associated with A-1154." evidence="10">
    <original>S</original>
    <variation>A</variation>
    <location>
        <position position="1151"/>
    </location>
</feature>
<feature type="mutagenesis site" description="Induces a stimulation by PKA instead of PKG; when associated with A-1151." evidence="10">
    <original>S</original>
    <variation>A</variation>
    <location>
        <position position="1154"/>
    </location>
</feature>
<feature type="sequence conflict" description="In Ref. 2; AAB03663." evidence="12" ref="2">
    <original>SSS</original>
    <variation>GST</variation>
    <location>
        <begin position="33"/>
        <end position="35"/>
    </location>
</feature>
<accession>Q28204</accession>
<accession>Q95J89</accession>
<accession>Q95J90</accession>
<accession>Q95J91</accession>
<keyword id="KW-0025">Alternative splicing</keyword>
<keyword id="KW-0106">Calcium</keyword>
<keyword id="KW-1003">Cell membrane</keyword>
<keyword id="KW-0407">Ion channel</keyword>
<keyword id="KW-0406">Ion transport</keyword>
<keyword id="KW-0449">Lipoprotein</keyword>
<keyword id="KW-0460">Magnesium</keyword>
<keyword id="KW-0472">Membrane</keyword>
<keyword id="KW-0479">Metal-binding</keyword>
<keyword id="KW-0564">Palmitate</keyword>
<keyword id="KW-0597">Phosphoprotein</keyword>
<keyword id="KW-0630">Potassium</keyword>
<keyword id="KW-0631">Potassium channel</keyword>
<keyword id="KW-0633">Potassium transport</keyword>
<keyword id="KW-1185">Reference proteome</keyword>
<keyword id="KW-0812">Transmembrane</keyword>
<keyword id="KW-1133">Transmembrane helix</keyword>
<keyword id="KW-0813">Transport</keyword>
<keyword id="KW-0851">Voltage-gated channel</keyword>
<dbReference type="EMBL" id="AY033472">
    <property type="protein sequence ID" value="AAK54352.1"/>
    <property type="molecule type" value="mRNA"/>
</dbReference>
<dbReference type="EMBL" id="AY033473">
    <property type="protein sequence ID" value="AAK54353.1"/>
    <property type="molecule type" value="mRNA"/>
</dbReference>
<dbReference type="EMBL" id="AY033474">
    <property type="protein sequence ID" value="AAK54354.1"/>
    <property type="molecule type" value="mRNA"/>
</dbReference>
<dbReference type="EMBL" id="U60105">
    <property type="protein sequence ID" value="AAB03663.1"/>
    <property type="molecule type" value="mRNA"/>
</dbReference>
<dbReference type="PIR" id="B53145">
    <property type="entry name" value="B53145"/>
</dbReference>
<dbReference type="RefSeq" id="NP_777105.1">
    <molecule id="Q28204-1"/>
    <property type="nucleotide sequence ID" value="NM_174680.2"/>
</dbReference>
<dbReference type="BMRB" id="Q28204"/>
<dbReference type="SMR" id="Q28204"/>
<dbReference type="BioGRID" id="159786">
    <property type="interactions" value="1"/>
</dbReference>
<dbReference type="FunCoup" id="Q28204">
    <property type="interactions" value="1461"/>
</dbReference>
<dbReference type="STRING" id="9913.ENSBTAP00000047743"/>
<dbReference type="ChEMBL" id="CHEMBL2111364"/>
<dbReference type="iPTMnet" id="Q28204"/>
<dbReference type="PaxDb" id="9913-ENSBTAP00000047743"/>
<dbReference type="Ensembl" id="ENSBTAT00000094706.1">
    <molecule id="Q28204-1"/>
    <property type="protein sequence ID" value="ENSBTAP00000085648.1"/>
    <property type="gene ID" value="ENSBTAG00000013300.7"/>
</dbReference>
<dbReference type="GeneID" id="282573"/>
<dbReference type="KEGG" id="bta:282573"/>
<dbReference type="CTD" id="3778"/>
<dbReference type="VEuPathDB" id="HostDB:ENSBTAG00000013300"/>
<dbReference type="eggNOG" id="KOG1420">
    <property type="taxonomic scope" value="Eukaryota"/>
</dbReference>
<dbReference type="GeneTree" id="ENSGT00940000154935"/>
<dbReference type="InParanoid" id="Q28204"/>
<dbReference type="OrthoDB" id="10035564at2759"/>
<dbReference type="TreeFam" id="TF314283"/>
<dbReference type="Reactome" id="R-BTA-1296052">
    <property type="pathway name" value="Ca2+ activated K+ channels"/>
</dbReference>
<dbReference type="Proteomes" id="UP000009136">
    <property type="component" value="Chromosome 28"/>
</dbReference>
<dbReference type="Bgee" id="ENSBTAG00000013300">
    <property type="expression patterns" value="Expressed in myometrium and 99 other cell types or tissues"/>
</dbReference>
<dbReference type="GO" id="GO:0016324">
    <property type="term" value="C:apical plasma membrane"/>
    <property type="evidence" value="ECO:0000247"/>
    <property type="project" value="AgBase"/>
</dbReference>
<dbReference type="GO" id="GO:0005901">
    <property type="term" value="C:caveola"/>
    <property type="evidence" value="ECO:0000247"/>
    <property type="project" value="AgBase"/>
</dbReference>
<dbReference type="GO" id="GO:0005737">
    <property type="term" value="C:cytoplasm"/>
    <property type="evidence" value="ECO:0000247"/>
    <property type="project" value="AgBase"/>
</dbReference>
<dbReference type="GO" id="GO:0005783">
    <property type="term" value="C:endoplasmic reticulum"/>
    <property type="evidence" value="ECO:0000247"/>
    <property type="project" value="AgBase"/>
</dbReference>
<dbReference type="GO" id="GO:0009897">
    <property type="term" value="C:external side of plasma membrane"/>
    <property type="evidence" value="ECO:0000247"/>
    <property type="project" value="AgBase"/>
</dbReference>
<dbReference type="GO" id="GO:0070062">
    <property type="term" value="C:extracellular exosome"/>
    <property type="evidence" value="ECO:0000247"/>
    <property type="project" value="AgBase"/>
</dbReference>
<dbReference type="GO" id="GO:0016020">
    <property type="term" value="C:membrane"/>
    <property type="evidence" value="ECO:0000247"/>
    <property type="project" value="AgBase"/>
</dbReference>
<dbReference type="GO" id="GO:0005886">
    <property type="term" value="C:plasma membrane"/>
    <property type="evidence" value="ECO:0000247"/>
    <property type="project" value="AgBase"/>
</dbReference>
<dbReference type="GO" id="GO:0045211">
    <property type="term" value="C:postsynaptic membrane"/>
    <property type="evidence" value="ECO:0000247"/>
    <property type="project" value="AgBase"/>
</dbReference>
<dbReference type="GO" id="GO:0043195">
    <property type="term" value="C:terminal bouton"/>
    <property type="evidence" value="ECO:0000247"/>
    <property type="project" value="AgBase"/>
</dbReference>
<dbReference type="GO" id="GO:0008076">
    <property type="term" value="C:voltage-gated potassium channel complex"/>
    <property type="evidence" value="ECO:0000247"/>
    <property type="project" value="AgBase"/>
</dbReference>
<dbReference type="GO" id="GO:0003779">
    <property type="term" value="F:actin binding"/>
    <property type="evidence" value="ECO:0000247"/>
    <property type="project" value="AgBase"/>
</dbReference>
<dbReference type="GO" id="GO:0015269">
    <property type="term" value="F:calcium-activated potassium channel activity"/>
    <property type="evidence" value="ECO:0000314"/>
    <property type="project" value="UniProtKB"/>
</dbReference>
<dbReference type="GO" id="GO:0060072">
    <property type="term" value="F:large conductance calcium-activated potassium channel activity"/>
    <property type="evidence" value="ECO:0000247"/>
    <property type="project" value="AgBase"/>
</dbReference>
<dbReference type="GO" id="GO:0046872">
    <property type="term" value="F:metal ion binding"/>
    <property type="evidence" value="ECO:0007669"/>
    <property type="project" value="UniProtKB-KW"/>
</dbReference>
<dbReference type="GO" id="GO:0005267">
    <property type="term" value="F:potassium channel activity"/>
    <property type="evidence" value="ECO:0000247"/>
    <property type="project" value="AgBase"/>
</dbReference>
<dbReference type="GO" id="GO:0005249">
    <property type="term" value="F:voltage-gated potassium channel activity"/>
    <property type="evidence" value="ECO:0000314"/>
    <property type="project" value="UniProtKB"/>
</dbReference>
<dbReference type="GO" id="GO:0007628">
    <property type="term" value="P:adult walking behavior"/>
    <property type="evidence" value="ECO:0000247"/>
    <property type="project" value="AgBase"/>
</dbReference>
<dbReference type="GO" id="GO:0048469">
    <property type="term" value="P:cell maturation"/>
    <property type="evidence" value="ECO:0000247"/>
    <property type="project" value="AgBase"/>
</dbReference>
<dbReference type="GO" id="GO:0007268">
    <property type="term" value="P:chemical synaptic transmission"/>
    <property type="evidence" value="ECO:0000247"/>
    <property type="project" value="AgBase"/>
</dbReference>
<dbReference type="GO" id="GO:0007623">
    <property type="term" value="P:circadian rhythm"/>
    <property type="evidence" value="ECO:0000247"/>
    <property type="project" value="AgBase"/>
</dbReference>
<dbReference type="GO" id="GO:0060082">
    <property type="term" value="P:eye blink reflex"/>
    <property type="evidence" value="ECO:0000247"/>
    <property type="project" value="AgBase"/>
</dbReference>
<dbReference type="GO" id="GO:0042491">
    <property type="term" value="P:inner ear auditory receptor cell differentiation"/>
    <property type="evidence" value="ECO:0000247"/>
    <property type="project" value="AgBase"/>
</dbReference>
<dbReference type="GO" id="GO:0030007">
    <property type="term" value="P:intracellular potassium ion homeostasis"/>
    <property type="evidence" value="ECO:0000247"/>
    <property type="project" value="AgBase"/>
</dbReference>
<dbReference type="GO" id="GO:0045475">
    <property type="term" value="P:locomotor rhythm"/>
    <property type="evidence" value="ECO:0000247"/>
    <property type="project" value="AgBase"/>
</dbReference>
<dbReference type="GO" id="GO:0060073">
    <property type="term" value="P:micturition"/>
    <property type="evidence" value="ECO:0000247"/>
    <property type="project" value="AgBase"/>
</dbReference>
<dbReference type="GO" id="GO:0045794">
    <property type="term" value="P:negative regulation of cell volume"/>
    <property type="evidence" value="ECO:0000247"/>
    <property type="project" value="AgBase"/>
</dbReference>
<dbReference type="GO" id="GO:0050885">
    <property type="term" value="P:neuromuscular process controlling balance"/>
    <property type="evidence" value="ECO:0000247"/>
    <property type="project" value="AgBase"/>
</dbReference>
<dbReference type="GO" id="GO:0019228">
    <property type="term" value="P:neuronal action potential"/>
    <property type="evidence" value="ECO:0000247"/>
    <property type="project" value="AgBase"/>
</dbReference>
<dbReference type="GO" id="GO:0043065">
    <property type="term" value="P:positive regulation of apoptotic process"/>
    <property type="evidence" value="ECO:0000247"/>
    <property type="project" value="AgBase"/>
</dbReference>
<dbReference type="GO" id="GO:0071805">
    <property type="term" value="P:potassium ion transmembrane transport"/>
    <property type="evidence" value="ECO:0000247"/>
    <property type="project" value="AgBase"/>
</dbReference>
<dbReference type="GO" id="GO:0006813">
    <property type="term" value="P:potassium ion transport"/>
    <property type="evidence" value="ECO:0000247"/>
    <property type="project" value="AgBase"/>
</dbReference>
<dbReference type="GO" id="GO:0051260">
    <property type="term" value="P:protein homooligomerization"/>
    <property type="evidence" value="ECO:0000247"/>
    <property type="project" value="AgBase"/>
</dbReference>
<dbReference type="GO" id="GO:0032344">
    <property type="term" value="P:regulation of aldosterone metabolic process"/>
    <property type="evidence" value="ECO:0000247"/>
    <property type="project" value="AgBase"/>
</dbReference>
<dbReference type="GO" id="GO:0042391">
    <property type="term" value="P:regulation of membrane potential"/>
    <property type="evidence" value="ECO:0000247"/>
    <property type="project" value="AgBase"/>
</dbReference>
<dbReference type="GO" id="GO:0060087">
    <property type="term" value="P:relaxation of vascular associated smooth muscle"/>
    <property type="evidence" value="ECO:0000247"/>
    <property type="project" value="AgBase"/>
</dbReference>
<dbReference type="GO" id="GO:0051592">
    <property type="term" value="P:response to calcium ion"/>
    <property type="evidence" value="ECO:0000247"/>
    <property type="project" value="AgBase"/>
</dbReference>
<dbReference type="GO" id="GO:0034465">
    <property type="term" value="P:response to carbon monoxide"/>
    <property type="evidence" value="ECO:0000247"/>
    <property type="project" value="AgBase"/>
</dbReference>
<dbReference type="GO" id="GO:0001666">
    <property type="term" value="P:response to hypoxia"/>
    <property type="evidence" value="ECO:0000247"/>
    <property type="project" value="AgBase"/>
</dbReference>
<dbReference type="GO" id="GO:0006970">
    <property type="term" value="P:response to osmotic stress"/>
    <property type="evidence" value="ECO:0000247"/>
    <property type="project" value="AgBase"/>
</dbReference>
<dbReference type="GO" id="GO:0046541">
    <property type="term" value="P:saliva secretion"/>
    <property type="evidence" value="ECO:0000247"/>
    <property type="project" value="AgBase"/>
</dbReference>
<dbReference type="GO" id="GO:0007605">
    <property type="term" value="P:sensory perception of sound"/>
    <property type="evidence" value="ECO:0000247"/>
    <property type="project" value="AgBase"/>
</dbReference>
<dbReference type="GO" id="GO:0060083">
    <property type="term" value="P:smooth muscle contraction involved in micturition"/>
    <property type="evidence" value="ECO:0000247"/>
    <property type="project" value="AgBase"/>
</dbReference>
<dbReference type="GO" id="GO:0042311">
    <property type="term" value="P:vasodilation"/>
    <property type="evidence" value="ECO:0000247"/>
    <property type="project" value="AgBase"/>
</dbReference>
<dbReference type="FunFam" id="3.40.50.720:FF:000098">
    <property type="entry name" value="calcium-activated potassium channel subunit alpha-1 isoform X3"/>
    <property type="match status" value="1"/>
</dbReference>
<dbReference type="FunFam" id="3.40.50.720:FF:000005">
    <property type="entry name" value="calcium-activated potassium channel subunit alpha-1 isoform X6"/>
    <property type="match status" value="1"/>
</dbReference>
<dbReference type="FunFam" id="1.10.287.70:FF:000015">
    <property type="entry name" value="Calcium-activated potassium channel subunit alpha-1 isoform X7"/>
    <property type="match status" value="1"/>
</dbReference>
<dbReference type="Gene3D" id="1.10.287.70">
    <property type="match status" value="1"/>
</dbReference>
<dbReference type="Gene3D" id="3.40.50.720">
    <property type="entry name" value="NAD(P)-binding Rossmann-like Domain"/>
    <property type="match status" value="2"/>
</dbReference>
<dbReference type="InterPro" id="IPR005821">
    <property type="entry name" value="Ion_trans_dom"/>
</dbReference>
<dbReference type="InterPro" id="IPR003929">
    <property type="entry name" value="K_chnl_BK_asu"/>
</dbReference>
<dbReference type="InterPro" id="IPR047871">
    <property type="entry name" value="K_chnl_Slo-like"/>
</dbReference>
<dbReference type="InterPro" id="IPR036291">
    <property type="entry name" value="NAD(P)-bd_dom_sf"/>
</dbReference>
<dbReference type="InterPro" id="IPR003148">
    <property type="entry name" value="RCK_N"/>
</dbReference>
<dbReference type="InterPro" id="IPR048735">
    <property type="entry name" value="Slowpoke-like_C"/>
</dbReference>
<dbReference type="PANTHER" id="PTHR10027">
    <property type="entry name" value="CALCIUM-ACTIVATED POTASSIUM CHANNEL ALPHA CHAIN"/>
    <property type="match status" value="1"/>
</dbReference>
<dbReference type="PANTHER" id="PTHR10027:SF28">
    <property type="entry name" value="CALCIUM-ACTIVATED POTASSIUM CHANNEL SUBUNIT ALPHA-1"/>
    <property type="match status" value="1"/>
</dbReference>
<dbReference type="Pfam" id="PF03493">
    <property type="entry name" value="BK_channel_a"/>
    <property type="match status" value="1"/>
</dbReference>
<dbReference type="Pfam" id="PF00520">
    <property type="entry name" value="Ion_trans"/>
    <property type="match status" value="1"/>
</dbReference>
<dbReference type="Pfam" id="PF22614">
    <property type="entry name" value="Slo-like_RCK"/>
    <property type="match status" value="2"/>
</dbReference>
<dbReference type="Pfam" id="PF21014">
    <property type="entry name" value="Slowpoke_C"/>
    <property type="match status" value="1"/>
</dbReference>
<dbReference type="PRINTS" id="PR01449">
    <property type="entry name" value="BKCHANNELA"/>
</dbReference>
<dbReference type="PRINTS" id="PR00169">
    <property type="entry name" value="KCHANNEL"/>
</dbReference>
<dbReference type="SUPFAM" id="SSF51735">
    <property type="entry name" value="NAD(P)-binding Rossmann-fold domains"/>
    <property type="match status" value="1"/>
</dbReference>
<dbReference type="SUPFAM" id="SSF81324">
    <property type="entry name" value="Voltage-gated potassium channels"/>
    <property type="match status" value="1"/>
</dbReference>
<dbReference type="PROSITE" id="PS51201">
    <property type="entry name" value="RCK_N"/>
    <property type="match status" value="2"/>
</dbReference>
<sequence length="1166" mass="130063">MANGGGGGGGGGGGSSLRMSSNIHANHLSLDASSSSSSSSSSSSSSSSVHEPKMDALIIPVTMEVPCDSRGQRMWWAFLASSMVTFFGGLFIILLWRTLKYLWTVCCHCGGKTKEAQKINNGSSQADGTLKPVDEKEETVAAEVGWMTSVKDWAGVMISAQTLTGRVLVVLVFALSIGALVIYFIDSSNPIESCQNFYKDFTLQIDMAFNVFFLLYFGLRFIAANDKLWFWLEVNSVVDFFTVPPVFVSVYLNRSWLGLRFLRALRLIQFSEILQFLNILKTSNSIKLVNLLSIFISTWLTAAGFIHLVENSGDPWENFQNNQALTYWECVYLLMVTMSTVGYGDVYAKTTLGRLFMVFFILGGLAMFASYVPEIIELIGNRKKYGGSYSAVSGRKHIVVCGHITLESVSNFLKDFLHKDRDDVNVEIVFLHNISPNLELEALFKRHFTQVEFYQGSVLNPHDLARVKIESADACLILANKYCADPDAEDASNIMRVISIKNYHPKIRIITQMLQYHNKAHLLNIPSWNWKEGDDAICLAELKLGFIAQSCLAQGLSTMLANLFSMRSFIKIEEDTWQKYYLEGVSNEMYTEYLSSAFVGLSFPTVCELCFVKLKLLMIAIEYKSANRESRILINPGNHLKIQEGTLGFFIASDAKEVKRAFFYCKACHDDITDPKRIKKCGCKRLEDEQPSTLSPKKKQRNGGMRNSPSSSPKLMRHDPLLIPGNDQIDNMDSNVKKYDSTGMFHWCAPKEIEKVILTRSEAAMTVLSGHVVVCIFGDVSSALIGLRNLVMPLRASNFHYHELKHIVFVGSIEYLKREWETLHNFPKVSILPGTPLSRADLRAVNINLCDMCVILSANQNNIDDTSLQDKECILASLNIKSMQFDDSIGVLQANSQGFTPPGMDRSSPDNSPVHGMLRQPSITTGVNIPIITELVNDTNVQFLDQDDDDDPDTELYLTQPFACGTAFAVSVLDSLMSATYFNDNILTLIRTLVTGGATPELEALIAEENALRGGYSTPQTLANRDRCRVAQLALLDGPFADLGDGGCYGDLFCKALKTYNMLCFGIYRLRDAHLSTPSQCTKRYVITNPPYEFELVPTDLIFCLMQFDHNAGQSRASLSHSSHSSQSSSKKSSSVHSIPSTANRQNRPKSRESRDKQKYVQEERL</sequence>
<evidence type="ECO:0000250" key="1"/>
<evidence type="ECO:0000250" key="2">
    <source>
        <dbReference type="UniProtKB" id="B7ZC96"/>
    </source>
</evidence>
<evidence type="ECO:0000250" key="3">
    <source>
        <dbReference type="UniProtKB" id="Q08460"/>
    </source>
</evidence>
<evidence type="ECO:0000250" key="4">
    <source>
        <dbReference type="UniProtKB" id="Q12791"/>
    </source>
</evidence>
<evidence type="ECO:0000255" key="5"/>
<evidence type="ECO:0000255" key="6">
    <source>
        <dbReference type="PROSITE-ProRule" id="PRU00543"/>
    </source>
</evidence>
<evidence type="ECO:0000256" key="7">
    <source>
        <dbReference type="SAM" id="MobiDB-lite"/>
    </source>
</evidence>
<evidence type="ECO:0000269" key="8">
    <source>
    </source>
</evidence>
<evidence type="ECO:0000269" key="9">
    <source>
    </source>
</evidence>
<evidence type="ECO:0000269" key="10">
    <source>
    </source>
</evidence>
<evidence type="ECO:0000303" key="11">
    <source>
    </source>
</evidence>
<evidence type="ECO:0000305" key="12"/>
<evidence type="ECO:0000305" key="13">
    <source>
    </source>
</evidence>
<reference key="1">
    <citation type="journal article" date="2001" name="J. Biol. Chem.">
        <title>A molecular switch for specific stimulation of the BKCa channel by cGMP and cAMP kinase.</title>
        <authorList>
            <person name="Zhou X.-B."/>
            <person name="Arntz C."/>
            <person name="Kamm S."/>
            <person name="Motejlek K."/>
            <person name="Sausbier U."/>
            <person name="Wang G.-X."/>
            <person name="Ruth P."/>
            <person name="Korth M."/>
        </authorList>
    </citation>
    <scope>NUCLEOTIDE SEQUENCE [MRNA] (ISOFORMS 1; 2 AND 3)</scope>
    <scope>ALTERNATIVE SPLICING</scope>
    <scope>PHOSPHORYLATION AT SER-1151 AND SER-1154</scope>
    <scope>MUTAGENESIS OF SER-1151 AND SER-1154</scope>
    <scope>FUNCTION</scope>
    <scope>TRANSPORTER ACTIVITY</scope>
    <source>
        <tissue>Trachea smooth muscle</tissue>
    </source>
</reference>
<reference key="2">
    <citation type="journal article" date="1996" name="Biochemistry">
        <title>An evolutionarily conserved binding site for serine proteinase inhibitors in large conductance calcium-activated potassium channels.</title>
        <authorList>
            <person name="Moss G.W.J."/>
            <person name="Marshall J."/>
            <person name="Morabito M."/>
            <person name="Howe J.R."/>
            <person name="Moczydlowski E."/>
        </authorList>
    </citation>
    <scope>NUCLEOTIDE SEQUENCE [MRNA] OF 33-1166 (ISOFORM 1)</scope>
    <scope>FUNCTION</scope>
    <scope>TRANSPORTER ACTIVITY</scope>
    <source>
        <tissue>Aortic smooth muscle</tissue>
    </source>
</reference>
<reference key="3">
    <citation type="journal article" date="2006" name="Nat. Neurosci.">
        <title>CaM kinase II phosphorylation of slo Thr107 regulates activity and ethanol responses of BK channels.</title>
        <authorList>
            <person name="Liu J."/>
            <person name="Asuncion-Chin M."/>
            <person name="Liu P."/>
            <person name="Dopico A.M."/>
        </authorList>
    </citation>
    <scope>ACTIVITY REGULATION</scope>
    <scope>PHOSPHORYLATION AT THR-139</scope>
    <scope>MUTAGENESIS OF THR-139</scope>
    <scope>FUNCTION</scope>
    <scope>TRANSPORTER ACTIVITY</scope>
</reference>
<protein>
    <recommendedName>
        <fullName>Calcium-activated potassium channel subunit alpha-1</fullName>
    </recommendedName>
    <alternativeName>
        <fullName>BK channel</fullName>
    </alternativeName>
    <alternativeName>
        <fullName>BKCA alpha</fullName>
    </alternativeName>
    <alternativeName>
        <fullName>Calcium-activated potassium channel, subfamily M subunit alpha-1</fullName>
    </alternativeName>
    <alternativeName>
        <fullName>K(VCA)alpha</fullName>
    </alternativeName>
    <alternativeName>
        <fullName>KCa1.1</fullName>
    </alternativeName>
    <alternativeName>
        <fullName>Maxi K channel</fullName>
        <shortName>MaxiK</shortName>
    </alternativeName>
    <alternativeName>
        <fullName>Slo-alpha</fullName>
    </alternativeName>
    <alternativeName>
        <fullName>Slo1</fullName>
    </alternativeName>
    <alternativeName>
        <fullName>Slowpoke homolog</fullName>
        <shortName>Slo homolog</shortName>
    </alternativeName>
    <alternativeName>
        <fullName>bSlo</fullName>
    </alternativeName>
</protein>